<sequence length="451" mass="47038">MGSSQSVEIPGGGTEGYHVLRVQENSPGHRAGLEPFFDFIVSINGSRLNKDNDTLKDLLKANVEKPVKMLIYSSKTLELREASVTPSNLWGGQGLLGVSIRFCSFDGANENVWHVLEVESNSPAALAGLRPHSDYIIGADTVMNESEDLFSLIETHEAKPLKLYVYNTDTDNCREVIITPNSAWGGEGSLGCGIGYGYLHRIPTRPFEEGKKISLPGQMTGTPITPLKDGFTEVQLSSVSPPSLSPPGTTGVEQSLSGLSISSAPPAVSNVLSTGVPTVPLLPPQVNQSLASMPPMNPATTLPSLMPLSAGLPSLPNLPSLSNFNLPAPHIMPGVGLPELGSPGLPPLPSLPPRNLPGIAPLPMLSDFLPSFPLVPEGSSAASAGEPLSSLPAMGPPSDPVMTTAKADASSLTVDVTSPASKVPTTVEDRVSDCTPAVEKPVSDADASEPS</sequence>
<dbReference type="EMBL" id="AK033413">
    <property type="protein sequence ID" value="BAC28276.1"/>
    <property type="molecule type" value="mRNA"/>
</dbReference>
<dbReference type="EMBL" id="AK077683">
    <property type="protein sequence ID" value="BAC36954.1"/>
    <property type="molecule type" value="mRNA"/>
</dbReference>
<dbReference type="EMBL" id="AK077706">
    <property type="protein sequence ID" value="BAC36969.1"/>
    <property type="molecule type" value="mRNA"/>
</dbReference>
<dbReference type="EMBL" id="AK148337">
    <property type="protein sequence ID" value="BAE28492.1"/>
    <property type="molecule type" value="mRNA"/>
</dbReference>
<dbReference type="EMBL" id="AK151843">
    <property type="protein sequence ID" value="BAE30735.1"/>
    <property type="molecule type" value="mRNA"/>
</dbReference>
<dbReference type="EMBL" id="AK152475">
    <property type="protein sequence ID" value="BAE31249.1"/>
    <property type="molecule type" value="mRNA"/>
</dbReference>
<dbReference type="EMBL" id="AK152544">
    <property type="protein sequence ID" value="BAE31299.1"/>
    <property type="molecule type" value="mRNA"/>
</dbReference>
<dbReference type="EMBL" id="AK152603">
    <property type="protein sequence ID" value="BAE31351.1"/>
    <property type="molecule type" value="mRNA"/>
</dbReference>
<dbReference type="EMBL" id="AK153049">
    <property type="protein sequence ID" value="BAE31677.1"/>
    <property type="molecule type" value="mRNA"/>
</dbReference>
<dbReference type="EMBL" id="AK169382">
    <property type="protein sequence ID" value="BAE41129.1"/>
    <property type="molecule type" value="mRNA"/>
</dbReference>
<dbReference type="EMBL" id="BC005600">
    <property type="protein sequence ID" value="AAH05600.1"/>
    <property type="molecule type" value="mRNA"/>
</dbReference>
<dbReference type="EMBL" id="BC016455">
    <property type="protein sequence ID" value="AAH16455.1"/>
    <property type="molecule type" value="mRNA"/>
</dbReference>
<dbReference type="CCDS" id="CCDS16109.1">
    <molecule id="Q99JX3-1"/>
</dbReference>
<dbReference type="RefSeq" id="NP_081628.3">
    <molecule id="Q99JX3-1"/>
    <property type="nucleotide sequence ID" value="NM_027352.4"/>
</dbReference>
<dbReference type="PDB" id="5GMI">
    <property type="method" value="X-ray"/>
    <property type="resolution" value="2.71 A"/>
    <property type="chains" value="A/B=2-208"/>
</dbReference>
<dbReference type="PDB" id="5GMJ">
    <property type="method" value="X-ray"/>
    <property type="resolution" value="2.99 A"/>
    <property type="chains" value="A/B=2-208"/>
</dbReference>
<dbReference type="PDB" id="5GML">
    <property type="method" value="X-ray"/>
    <property type="resolution" value="2.55 A"/>
    <property type="chains" value="A/B=2-208"/>
</dbReference>
<dbReference type="PDB" id="5H3J">
    <property type="method" value="X-ray"/>
    <property type="resolution" value="1.33 A"/>
    <property type="chains" value="A=2-208"/>
</dbReference>
<dbReference type="PDBsum" id="5GMI"/>
<dbReference type="PDBsum" id="5GMJ"/>
<dbReference type="PDBsum" id="5GML"/>
<dbReference type="PDBsum" id="5H3J"/>
<dbReference type="SMR" id="Q99JX3"/>
<dbReference type="BioGRID" id="213929">
    <property type="interactions" value="24"/>
</dbReference>
<dbReference type="FunCoup" id="Q99JX3">
    <property type="interactions" value="3415"/>
</dbReference>
<dbReference type="STRING" id="10090.ENSMUSP00000028509"/>
<dbReference type="TCDB" id="9.A.48.1.1">
    <property type="family name" value="the unconventional protein secretion (ups) system family"/>
</dbReference>
<dbReference type="GlyGen" id="Q99JX3">
    <property type="glycosylation" value="2 sites, 1 O-linked glycan (2 sites)"/>
</dbReference>
<dbReference type="iPTMnet" id="Q99JX3"/>
<dbReference type="PhosphoSitePlus" id="Q99JX3"/>
<dbReference type="jPOST" id="Q99JX3"/>
<dbReference type="PaxDb" id="10090-ENSMUSP00000028509"/>
<dbReference type="PeptideAtlas" id="Q99JX3"/>
<dbReference type="ProteomicsDB" id="267743">
    <molecule id="Q99JX3-1"/>
</dbReference>
<dbReference type="ProteomicsDB" id="267744">
    <molecule id="Q99JX3-2"/>
</dbReference>
<dbReference type="Pumba" id="Q99JX3"/>
<dbReference type="Antibodypedia" id="33839">
    <property type="antibodies" value="305 antibodies from 31 providers"/>
</dbReference>
<dbReference type="DNASU" id="70231"/>
<dbReference type="Ensembl" id="ENSMUST00000028509.11">
    <molecule id="Q99JX3-1"/>
    <property type="protein sequence ID" value="ENSMUSP00000028509.5"/>
    <property type="gene ID" value="ENSMUSG00000014959.13"/>
</dbReference>
<dbReference type="GeneID" id="70231"/>
<dbReference type="KEGG" id="mmu:70231"/>
<dbReference type="UCSC" id="uc008jzo.2">
    <molecule id="Q99JX3-1"/>
    <property type="organism name" value="mouse"/>
</dbReference>
<dbReference type="AGR" id="MGI:2135962"/>
<dbReference type="CTD" id="26003"/>
<dbReference type="MGI" id="MGI:2135962">
    <property type="gene designation" value="Gorasp2"/>
</dbReference>
<dbReference type="VEuPathDB" id="HostDB:ENSMUSG00000014959"/>
<dbReference type="eggNOG" id="KOG3834">
    <property type="taxonomic scope" value="Eukaryota"/>
</dbReference>
<dbReference type="GeneTree" id="ENSGT00390000008686"/>
<dbReference type="InParanoid" id="Q99JX3"/>
<dbReference type="OMA" id="GLPEVMH"/>
<dbReference type="OrthoDB" id="3318at2759"/>
<dbReference type="PhylomeDB" id="Q99JX3"/>
<dbReference type="TreeFam" id="TF314053"/>
<dbReference type="Reactome" id="R-MMU-162658">
    <property type="pathway name" value="Golgi Cisternae Pericentriolar Stack Reorganization"/>
</dbReference>
<dbReference type="BioGRID-ORCS" id="70231">
    <property type="hits" value="2 hits in 76 CRISPR screens"/>
</dbReference>
<dbReference type="ChiTaRS" id="Gorasp2">
    <property type="organism name" value="mouse"/>
</dbReference>
<dbReference type="PRO" id="PR:Q99JX3"/>
<dbReference type="Proteomes" id="UP000000589">
    <property type="component" value="Chromosome 2"/>
</dbReference>
<dbReference type="RNAct" id="Q99JX3">
    <property type="molecule type" value="protein"/>
</dbReference>
<dbReference type="Bgee" id="ENSMUSG00000014959">
    <property type="expression patterns" value="Expressed in ileal epithelium and 261 other cell types or tissues"/>
</dbReference>
<dbReference type="ExpressionAtlas" id="Q99JX3">
    <property type="expression patterns" value="baseline and differential"/>
</dbReference>
<dbReference type="GO" id="GO:0005789">
    <property type="term" value="C:endoplasmic reticulum membrane"/>
    <property type="evidence" value="ECO:0000250"/>
    <property type="project" value="UniProtKB"/>
</dbReference>
<dbReference type="GO" id="GO:0005794">
    <property type="term" value="C:Golgi apparatus"/>
    <property type="evidence" value="ECO:0000250"/>
    <property type="project" value="UniProtKB"/>
</dbReference>
<dbReference type="GO" id="GO:0000139">
    <property type="term" value="C:Golgi membrane"/>
    <property type="evidence" value="ECO:0000250"/>
    <property type="project" value="UniProtKB"/>
</dbReference>
<dbReference type="GO" id="GO:0030154">
    <property type="term" value="P:cell differentiation"/>
    <property type="evidence" value="ECO:0007669"/>
    <property type="project" value="UniProtKB-KW"/>
</dbReference>
<dbReference type="GO" id="GO:0061951">
    <property type="term" value="P:establishment of protein localization to plasma membrane"/>
    <property type="evidence" value="ECO:0000250"/>
    <property type="project" value="UniProtKB"/>
</dbReference>
<dbReference type="GO" id="GO:0070925">
    <property type="term" value="P:organelle assembly"/>
    <property type="evidence" value="ECO:0007669"/>
    <property type="project" value="Ensembl"/>
</dbReference>
<dbReference type="GO" id="GO:0006996">
    <property type="term" value="P:organelle organization"/>
    <property type="evidence" value="ECO:0000250"/>
    <property type="project" value="UniProtKB"/>
</dbReference>
<dbReference type="GO" id="GO:0034976">
    <property type="term" value="P:response to endoplasmic reticulum stress"/>
    <property type="evidence" value="ECO:0000250"/>
    <property type="project" value="UniProtKB"/>
</dbReference>
<dbReference type="GO" id="GO:0006986">
    <property type="term" value="P:response to unfolded protein"/>
    <property type="evidence" value="ECO:0000315"/>
    <property type="project" value="MGI"/>
</dbReference>
<dbReference type="GO" id="GO:0007283">
    <property type="term" value="P:spermatogenesis"/>
    <property type="evidence" value="ECO:0007669"/>
    <property type="project" value="UniProtKB-KW"/>
</dbReference>
<dbReference type="FunFam" id="2.30.42.10:FF:000026">
    <property type="entry name" value="Golgi reassembly stacking protein 2"/>
    <property type="match status" value="1"/>
</dbReference>
<dbReference type="FunFam" id="2.30.42.10:FF:000056">
    <property type="entry name" value="Golgi reassembly-stacking protein 2 isoform 1"/>
    <property type="match status" value="1"/>
</dbReference>
<dbReference type="Gene3D" id="2.30.42.10">
    <property type="match status" value="2"/>
</dbReference>
<dbReference type="InterPro" id="IPR007583">
    <property type="entry name" value="GRASP55_65"/>
</dbReference>
<dbReference type="InterPro" id="IPR024958">
    <property type="entry name" value="GRASP_PDZ"/>
</dbReference>
<dbReference type="InterPro" id="IPR036034">
    <property type="entry name" value="PDZ_sf"/>
</dbReference>
<dbReference type="PANTHER" id="PTHR12893">
    <property type="entry name" value="GOLGI REASSEMBLY STACKING PROTEIN GRASP"/>
    <property type="match status" value="1"/>
</dbReference>
<dbReference type="PANTHER" id="PTHR12893:SF1">
    <property type="entry name" value="GOLGI REASSEMBLY-STACKING PROTEIN 2"/>
    <property type="match status" value="1"/>
</dbReference>
<dbReference type="Pfam" id="PF04495">
    <property type="entry name" value="GRASP55_65"/>
    <property type="match status" value="1"/>
</dbReference>
<dbReference type="SUPFAM" id="SSF50156">
    <property type="entry name" value="PDZ domain-like"/>
    <property type="match status" value="2"/>
</dbReference>
<dbReference type="PROSITE" id="PS51865">
    <property type="entry name" value="PDZ_GRASP"/>
    <property type="match status" value="2"/>
</dbReference>
<proteinExistence type="evidence at protein level"/>
<feature type="initiator methionine" description="Removed" evidence="2">
    <location>
        <position position="1"/>
    </location>
</feature>
<feature type="chain" id="PRO_0000087546" description="Golgi reassembly-stacking protein 2">
    <location>
        <begin position="2"/>
        <end position="451"/>
    </location>
</feature>
<feature type="domain" description="PDZ GRASP-type 1" evidence="4">
    <location>
        <begin position="15"/>
        <end position="105"/>
    </location>
</feature>
<feature type="domain" description="PDZ GRASP-type 2" evidence="4">
    <location>
        <begin position="111"/>
        <end position="199"/>
    </location>
</feature>
<feature type="region of interest" description="GRASP" evidence="5">
    <location>
        <begin position="15"/>
        <end position="215"/>
    </location>
</feature>
<feature type="region of interest" description="Important for membrane binding" evidence="1">
    <location>
        <begin position="194"/>
        <end position="199"/>
    </location>
</feature>
<feature type="region of interest" description="Disordered" evidence="6">
    <location>
        <begin position="236"/>
        <end position="255"/>
    </location>
</feature>
<feature type="region of interest" description="Disordered" evidence="6">
    <location>
        <begin position="377"/>
        <end position="451"/>
    </location>
</feature>
<feature type="compositionally biased region" description="Low complexity" evidence="6">
    <location>
        <begin position="236"/>
        <end position="252"/>
    </location>
</feature>
<feature type="compositionally biased region" description="Polar residues" evidence="6">
    <location>
        <begin position="410"/>
        <end position="424"/>
    </location>
</feature>
<feature type="modified residue" description="Dimethylated arginine" evidence="3">
    <location>
        <position position="30"/>
    </location>
</feature>
<feature type="modified residue" description="Dimethylated arginine" evidence="3">
    <location>
        <position position="47"/>
    </location>
</feature>
<feature type="modified residue" description="Phosphoserine" evidence="2">
    <location>
        <position position="214"/>
    </location>
</feature>
<feature type="modified residue" description="Phosphothreonine" evidence="2">
    <location>
        <position position="222"/>
    </location>
</feature>
<feature type="modified residue" description="Phosphothreonine; by MAPK" evidence="2">
    <location>
        <position position="225"/>
    </location>
</feature>
<feature type="modified residue" description="Phosphoserine" evidence="18">
    <location>
        <position position="411"/>
    </location>
</feature>
<feature type="modified residue" description="Phosphothreonine" evidence="2">
    <location>
        <position position="417"/>
    </location>
</feature>
<feature type="modified residue" description="Phosphothreonine" evidence="2">
    <location>
        <position position="435"/>
    </location>
</feature>
<feature type="modified residue" description="Phosphoserine" evidence="18">
    <location>
        <position position="443"/>
    </location>
</feature>
<feature type="modified residue" description="Phosphoserine" evidence="2">
    <location>
        <position position="448"/>
    </location>
</feature>
<feature type="lipid moiety-binding region" description="N-myristoyl glycine" evidence="2">
    <location>
        <position position="2"/>
    </location>
</feature>
<feature type="splice variant" id="VSP_011301" description="In isoform 2." evidence="12">
    <location>
        <begin position="1"/>
        <end position="68"/>
    </location>
</feature>
<feature type="mutagenesis site" description="Reduced interaction with BLZF1." evidence="8">
    <original>G</original>
    <variation>D</variation>
    <location>
        <position position="97"/>
    </location>
</feature>
<feature type="mutagenesis site" description="No significant effect on interaction with BLZF1." evidence="8">
    <original>R</original>
    <variation>A</variation>
    <location>
        <position position="101"/>
    </location>
</feature>
<feature type="sequence conflict" description="In Ref. 3; AAH16455." evidence="13" ref="3">
    <original>Q</original>
    <variation>L</variation>
    <location>
        <position position="93"/>
    </location>
</feature>
<feature type="sequence conflict" description="In Ref. 2; BAC28276." evidence="13" ref="2">
    <original>P</original>
    <variation>L</variation>
    <location>
        <position position="352"/>
    </location>
</feature>
<feature type="strand" evidence="20">
    <location>
        <begin position="2"/>
        <end position="4"/>
    </location>
</feature>
<feature type="strand" evidence="21">
    <location>
        <begin position="14"/>
        <end position="22"/>
    </location>
</feature>
<feature type="helix" evidence="21">
    <location>
        <begin position="27"/>
        <end position="30"/>
    </location>
</feature>
<feature type="turn" evidence="21">
    <location>
        <begin position="35"/>
        <end position="37"/>
    </location>
</feature>
<feature type="strand" evidence="21">
    <location>
        <begin position="38"/>
        <end position="43"/>
    </location>
</feature>
<feature type="strand" evidence="21">
    <location>
        <begin position="50"/>
        <end position="53"/>
    </location>
</feature>
<feature type="helix" evidence="21">
    <location>
        <begin position="54"/>
        <end position="61"/>
    </location>
</feature>
<feature type="turn" evidence="21">
    <location>
        <begin position="62"/>
        <end position="64"/>
    </location>
</feature>
<feature type="strand" evidence="21">
    <location>
        <begin position="67"/>
        <end position="73"/>
    </location>
</feature>
<feature type="turn" evidence="21">
    <location>
        <begin position="74"/>
        <end position="76"/>
    </location>
</feature>
<feature type="strand" evidence="21">
    <location>
        <begin position="79"/>
        <end position="84"/>
    </location>
</feature>
<feature type="strand" evidence="21">
    <location>
        <begin position="90"/>
        <end position="96"/>
    </location>
</feature>
<feature type="strand" evidence="21">
    <location>
        <begin position="98"/>
        <end position="104"/>
    </location>
</feature>
<feature type="helix" evidence="21">
    <location>
        <begin position="108"/>
        <end position="110"/>
    </location>
</feature>
<feature type="strand" evidence="21">
    <location>
        <begin position="113"/>
        <end position="118"/>
    </location>
</feature>
<feature type="helix" evidence="21">
    <location>
        <begin position="123"/>
        <end position="127"/>
    </location>
</feature>
<feature type="turn" evidence="21">
    <location>
        <begin position="131"/>
        <end position="133"/>
    </location>
</feature>
<feature type="strand" evidence="21">
    <location>
        <begin position="134"/>
        <end position="141"/>
    </location>
</feature>
<feature type="strand" evidence="20">
    <location>
        <begin position="143"/>
        <end position="145"/>
    </location>
</feature>
<feature type="helix" evidence="21">
    <location>
        <begin position="148"/>
        <end position="155"/>
    </location>
</feature>
<feature type="turn" evidence="21">
    <location>
        <begin position="156"/>
        <end position="158"/>
    </location>
</feature>
<feature type="strand" evidence="21">
    <location>
        <begin position="161"/>
        <end position="167"/>
    </location>
</feature>
<feature type="turn" evidence="21">
    <location>
        <begin position="168"/>
        <end position="171"/>
    </location>
</feature>
<feature type="strand" evidence="21">
    <location>
        <begin position="172"/>
        <end position="178"/>
    </location>
</feature>
<feature type="strand" evidence="21">
    <location>
        <begin position="184"/>
        <end position="190"/>
    </location>
</feature>
<feature type="strand" evidence="21">
    <location>
        <begin position="192"/>
        <end position="195"/>
    </location>
</feature>
<feature type="helix" evidence="19">
    <location>
        <begin position="198"/>
        <end position="200"/>
    </location>
</feature>
<protein>
    <recommendedName>
        <fullName>Golgi reassembly-stacking protein 2</fullName>
        <shortName>GRS2</shortName>
    </recommendedName>
    <alternativeName>
        <fullName>Golgi reassembly-stacking protein of 55 kDa</fullName>
        <shortName evidence="11">GRASP55</shortName>
    </alternativeName>
</protein>
<organism>
    <name type="scientific">Mus musculus</name>
    <name type="common">Mouse</name>
    <dbReference type="NCBI Taxonomy" id="10090"/>
    <lineage>
        <taxon>Eukaryota</taxon>
        <taxon>Metazoa</taxon>
        <taxon>Chordata</taxon>
        <taxon>Craniata</taxon>
        <taxon>Vertebrata</taxon>
        <taxon>Euteleostomi</taxon>
        <taxon>Mammalia</taxon>
        <taxon>Eutheria</taxon>
        <taxon>Euarchontoglires</taxon>
        <taxon>Glires</taxon>
        <taxon>Rodentia</taxon>
        <taxon>Myomorpha</taxon>
        <taxon>Muroidea</taxon>
        <taxon>Muridae</taxon>
        <taxon>Murinae</taxon>
        <taxon>Mus</taxon>
        <taxon>Mus</taxon>
    </lineage>
</organism>
<gene>
    <name type="primary">Gorasp2</name>
</gene>
<keyword id="KW-0002">3D-structure</keyword>
<keyword id="KW-0025">Alternative splicing</keyword>
<keyword id="KW-0221">Differentiation</keyword>
<keyword id="KW-0256">Endoplasmic reticulum</keyword>
<keyword id="KW-0333">Golgi apparatus</keyword>
<keyword id="KW-0449">Lipoprotein</keyword>
<keyword id="KW-0472">Membrane</keyword>
<keyword id="KW-0488">Methylation</keyword>
<keyword id="KW-0519">Myristate</keyword>
<keyword id="KW-0564">Palmitate</keyword>
<keyword id="KW-0597">Phosphoprotein</keyword>
<keyword id="KW-1185">Reference proteome</keyword>
<keyword id="KW-0677">Repeat</keyword>
<keyword id="KW-0744">Spermatogenesis</keyword>
<name>GORS2_MOUSE</name>
<evidence type="ECO:0000250" key="1"/>
<evidence type="ECO:0000250" key="2">
    <source>
        <dbReference type="UniProtKB" id="Q9H8Y8"/>
    </source>
</evidence>
<evidence type="ECO:0000250" key="3">
    <source>
        <dbReference type="UniProtKB" id="Q9R064"/>
    </source>
</evidence>
<evidence type="ECO:0000255" key="4">
    <source>
        <dbReference type="PROSITE-ProRule" id="PRU01212"/>
    </source>
</evidence>
<evidence type="ECO:0000255" key="5">
    <source>
        <dbReference type="PROSITE-ProRule" id="PRU01214"/>
    </source>
</evidence>
<evidence type="ECO:0000256" key="6">
    <source>
        <dbReference type="SAM" id="MobiDB-lite"/>
    </source>
</evidence>
<evidence type="ECO:0000269" key="7">
    <source>
    </source>
</evidence>
<evidence type="ECO:0000269" key="8">
    <source>
    </source>
</evidence>
<evidence type="ECO:0000269" key="9">
    <source>
    </source>
</evidence>
<evidence type="ECO:0000269" key="10">
    <source>
    </source>
</evidence>
<evidence type="ECO:0000303" key="11">
    <source>
    </source>
</evidence>
<evidence type="ECO:0000303" key="12">
    <source>
    </source>
</evidence>
<evidence type="ECO:0000305" key="13"/>
<evidence type="ECO:0007744" key="14">
    <source>
        <dbReference type="PDB" id="5GMI"/>
    </source>
</evidence>
<evidence type="ECO:0007744" key="15">
    <source>
        <dbReference type="PDB" id="5GMJ"/>
    </source>
</evidence>
<evidence type="ECO:0007744" key="16">
    <source>
        <dbReference type="PDB" id="5GML"/>
    </source>
</evidence>
<evidence type="ECO:0007744" key="17">
    <source>
        <dbReference type="PDB" id="5H3J"/>
    </source>
</evidence>
<evidence type="ECO:0007744" key="18">
    <source>
    </source>
</evidence>
<evidence type="ECO:0007829" key="19">
    <source>
        <dbReference type="PDB" id="5GMI"/>
    </source>
</evidence>
<evidence type="ECO:0007829" key="20">
    <source>
        <dbReference type="PDB" id="5GMJ"/>
    </source>
</evidence>
<evidence type="ECO:0007829" key="21">
    <source>
        <dbReference type="PDB" id="5H3J"/>
    </source>
</evidence>
<comment type="function">
    <text evidence="2 9 10">Key structural protein of the Golgi apparatus (PubMed:32573693). The membrane cisternae of the Golgi apparatus adhere to each other to form stacks, which are aligned side by side to form the Golgi ribbon (PubMed:32573693). Acting in concert with GORASP1/GRASP65, is required for the formation and maintenance of the Golgi ribbon, and may be dispensable for the formation of stacks (PubMed:32573693). However, other studies suggest that GORASP2 plays a role in assembly and membrane stacking of the Golgi cisternae, and in the process by which Golgi stacks reform after breakdown during mitosis and meiosis (By similarity). May regulate the intracellular transport and presentation of a defined set of transmembrane proteins, such as transmembrane TGFA (By similarity). Required for normal acrosome formation during spermiogenesis and normal male fertility, probably by promoting colocalization of JAM2 and JAM3 at contact sites between germ cells and Sertoli cells (PubMed:28617811). Mediates ER stress-induced unconventional (ER/Golgi-independent) trafficking of core-glycosylated CFTR to cell membrane (By similarity).</text>
</comment>
<comment type="subunit">
    <text evidence="2 3 7 8 9">Homodimer. Homooligomer. ER stress induces phosphorylation-dependent monomerization (By similarity). Interacts with BLZF1/Golgin 45 (PubMed:11739401, PubMed:28049725). Identified in a complex with RAB2 and GORASP2 (PubMed:11739401). Interacts with JAM2 and JAM3 (PubMed:28617811). Interacts with members of the p24 cargo receptors. Interacts with CNIH and the cytoplasmic domain of transmembrane TGFA, prior its transit in the trans-Golgi. Interacts with KCTD5 (By similarity). Interacts with TMED2 and TMED3 (By similarity). Interacts with SEC16A in response to ER stress (By similarity). Interacts (via PDZ GRASP-type 1 domain) with core-glycosylated CFTR in response to ER stress (By similarity).</text>
</comment>
<comment type="subcellular location">
    <subcellularLocation>
        <location evidence="3">Golgi apparatus membrane</location>
        <topology evidence="3">Lipid-anchor</topology>
    </subcellularLocation>
    <subcellularLocation>
        <location evidence="2">Endoplasmic reticulum membrane</location>
    </subcellularLocation>
    <subcellularLocation>
        <location evidence="2">Golgi apparatus</location>
    </subcellularLocation>
    <text evidence="2 3">Detected in the intermediate Golgi, membrane-associated. ER stress triggers its relocalization from Golgi to ER membrane.</text>
</comment>
<comment type="alternative products">
    <event type="alternative splicing"/>
    <isoform>
        <id>Q99JX3-1</id>
        <name>1</name>
        <sequence type="displayed"/>
    </isoform>
    <isoform>
        <id>Q99JX3-2</id>
        <name>2</name>
        <sequence type="described" ref="VSP_011301"/>
    </isoform>
</comment>
<comment type="tissue specificity">
    <text evidence="9">Detected in lung, heart and testis. Colocalized in a polarized fashion in the acrosome region with JAM3 in round spermatids (at protein level).</text>
</comment>
<comment type="PTM">
    <text evidence="2 3">Myristoylated (By similarity). Myristoylation is essential for the Golgi targeting (By similarity).</text>
</comment>
<comment type="PTM">
    <text evidence="2">Palmitoylated.</text>
</comment>
<comment type="PTM">
    <text evidence="2">Phosphorylated in mitotic cells. ER stress-induced phosphorylation at Ser-443 induces monomerization and subsequent relocalization from Golgi to ER which is essential for mediating unconventional (ER/Golgi-independent) trafficking of CFTR to the cell membrane.</text>
</comment>
<comment type="disruption phenotype">
    <text evidence="9">Mutant mice have normal weight at birth, but display growth retardation and lower body weight during postnatal development and in adulthood. Females display normal fertility. Males have normal mating behavior, but are infertile, due to defects in spermiogenesis and acrosome formation.</text>
</comment>
<comment type="similarity">
    <text evidence="13">Belongs to the GORASP family.</text>
</comment>
<reference key="1">
    <citation type="journal article" date="1999" name="EMBO J.">
        <title>GRASP55, a second mammalian GRASP protein involved in the stacking of Golgi cisternae in a cell-free system.</title>
        <authorList>
            <person name="Shorter J."/>
            <person name="Watson R."/>
            <person name="Giannakou M.-E."/>
            <person name="Clarke M."/>
            <person name="Warren G."/>
            <person name="Barr F.A."/>
        </authorList>
    </citation>
    <scope>NUCLEOTIDE SEQUENCE [MRNA] (ISOFORM 1)</scope>
</reference>
<reference key="2">
    <citation type="journal article" date="2005" name="Science">
        <title>The transcriptional landscape of the mammalian genome.</title>
        <authorList>
            <person name="Carninci P."/>
            <person name="Kasukawa T."/>
            <person name="Katayama S."/>
            <person name="Gough J."/>
            <person name="Frith M.C."/>
            <person name="Maeda N."/>
            <person name="Oyama R."/>
            <person name="Ravasi T."/>
            <person name="Lenhard B."/>
            <person name="Wells C."/>
            <person name="Kodzius R."/>
            <person name="Shimokawa K."/>
            <person name="Bajic V.B."/>
            <person name="Brenner S.E."/>
            <person name="Batalov S."/>
            <person name="Forrest A.R."/>
            <person name="Zavolan M."/>
            <person name="Davis M.J."/>
            <person name="Wilming L.G."/>
            <person name="Aidinis V."/>
            <person name="Allen J.E."/>
            <person name="Ambesi-Impiombato A."/>
            <person name="Apweiler R."/>
            <person name="Aturaliya R.N."/>
            <person name="Bailey T.L."/>
            <person name="Bansal M."/>
            <person name="Baxter L."/>
            <person name="Beisel K.W."/>
            <person name="Bersano T."/>
            <person name="Bono H."/>
            <person name="Chalk A.M."/>
            <person name="Chiu K.P."/>
            <person name="Choudhary V."/>
            <person name="Christoffels A."/>
            <person name="Clutterbuck D.R."/>
            <person name="Crowe M.L."/>
            <person name="Dalla E."/>
            <person name="Dalrymple B.P."/>
            <person name="de Bono B."/>
            <person name="Della Gatta G."/>
            <person name="di Bernardo D."/>
            <person name="Down T."/>
            <person name="Engstrom P."/>
            <person name="Fagiolini M."/>
            <person name="Faulkner G."/>
            <person name="Fletcher C.F."/>
            <person name="Fukushima T."/>
            <person name="Furuno M."/>
            <person name="Futaki S."/>
            <person name="Gariboldi M."/>
            <person name="Georgii-Hemming P."/>
            <person name="Gingeras T.R."/>
            <person name="Gojobori T."/>
            <person name="Green R.E."/>
            <person name="Gustincich S."/>
            <person name="Harbers M."/>
            <person name="Hayashi Y."/>
            <person name="Hensch T.K."/>
            <person name="Hirokawa N."/>
            <person name="Hill D."/>
            <person name="Huminiecki L."/>
            <person name="Iacono M."/>
            <person name="Ikeo K."/>
            <person name="Iwama A."/>
            <person name="Ishikawa T."/>
            <person name="Jakt M."/>
            <person name="Kanapin A."/>
            <person name="Katoh M."/>
            <person name="Kawasawa Y."/>
            <person name="Kelso J."/>
            <person name="Kitamura H."/>
            <person name="Kitano H."/>
            <person name="Kollias G."/>
            <person name="Krishnan S.P."/>
            <person name="Kruger A."/>
            <person name="Kummerfeld S.K."/>
            <person name="Kurochkin I.V."/>
            <person name="Lareau L.F."/>
            <person name="Lazarevic D."/>
            <person name="Lipovich L."/>
            <person name="Liu J."/>
            <person name="Liuni S."/>
            <person name="McWilliam S."/>
            <person name="Madan Babu M."/>
            <person name="Madera M."/>
            <person name="Marchionni L."/>
            <person name="Matsuda H."/>
            <person name="Matsuzawa S."/>
            <person name="Miki H."/>
            <person name="Mignone F."/>
            <person name="Miyake S."/>
            <person name="Morris K."/>
            <person name="Mottagui-Tabar S."/>
            <person name="Mulder N."/>
            <person name="Nakano N."/>
            <person name="Nakauchi H."/>
            <person name="Ng P."/>
            <person name="Nilsson R."/>
            <person name="Nishiguchi S."/>
            <person name="Nishikawa S."/>
            <person name="Nori F."/>
            <person name="Ohara O."/>
            <person name="Okazaki Y."/>
            <person name="Orlando V."/>
            <person name="Pang K.C."/>
            <person name="Pavan W.J."/>
            <person name="Pavesi G."/>
            <person name="Pesole G."/>
            <person name="Petrovsky N."/>
            <person name="Piazza S."/>
            <person name="Reed J."/>
            <person name="Reid J.F."/>
            <person name="Ring B.Z."/>
            <person name="Ringwald M."/>
            <person name="Rost B."/>
            <person name="Ruan Y."/>
            <person name="Salzberg S.L."/>
            <person name="Sandelin A."/>
            <person name="Schneider C."/>
            <person name="Schoenbach C."/>
            <person name="Sekiguchi K."/>
            <person name="Semple C.A."/>
            <person name="Seno S."/>
            <person name="Sessa L."/>
            <person name="Sheng Y."/>
            <person name="Shibata Y."/>
            <person name="Shimada H."/>
            <person name="Shimada K."/>
            <person name="Silva D."/>
            <person name="Sinclair B."/>
            <person name="Sperling S."/>
            <person name="Stupka E."/>
            <person name="Sugiura K."/>
            <person name="Sultana R."/>
            <person name="Takenaka Y."/>
            <person name="Taki K."/>
            <person name="Tammoja K."/>
            <person name="Tan S.L."/>
            <person name="Tang S."/>
            <person name="Taylor M.S."/>
            <person name="Tegner J."/>
            <person name="Teichmann S.A."/>
            <person name="Ueda H.R."/>
            <person name="van Nimwegen E."/>
            <person name="Verardo R."/>
            <person name="Wei C.L."/>
            <person name="Yagi K."/>
            <person name="Yamanishi H."/>
            <person name="Zabarovsky E."/>
            <person name="Zhu S."/>
            <person name="Zimmer A."/>
            <person name="Hide W."/>
            <person name="Bult C."/>
            <person name="Grimmond S.M."/>
            <person name="Teasdale R.D."/>
            <person name="Liu E.T."/>
            <person name="Brusic V."/>
            <person name="Quackenbush J."/>
            <person name="Wahlestedt C."/>
            <person name="Mattick J.S."/>
            <person name="Hume D.A."/>
            <person name="Kai C."/>
            <person name="Sasaki D."/>
            <person name="Tomaru Y."/>
            <person name="Fukuda S."/>
            <person name="Kanamori-Katayama M."/>
            <person name="Suzuki M."/>
            <person name="Aoki J."/>
            <person name="Arakawa T."/>
            <person name="Iida J."/>
            <person name="Imamura K."/>
            <person name="Itoh M."/>
            <person name="Kato T."/>
            <person name="Kawaji H."/>
            <person name="Kawagashira N."/>
            <person name="Kawashima T."/>
            <person name="Kojima M."/>
            <person name="Kondo S."/>
            <person name="Konno H."/>
            <person name="Nakano K."/>
            <person name="Ninomiya N."/>
            <person name="Nishio T."/>
            <person name="Okada M."/>
            <person name="Plessy C."/>
            <person name="Shibata K."/>
            <person name="Shiraki T."/>
            <person name="Suzuki S."/>
            <person name="Tagami M."/>
            <person name="Waki K."/>
            <person name="Watahiki A."/>
            <person name="Okamura-Oho Y."/>
            <person name="Suzuki H."/>
            <person name="Kawai J."/>
            <person name="Hayashizaki Y."/>
        </authorList>
    </citation>
    <scope>NUCLEOTIDE SEQUENCE [LARGE SCALE MRNA] (ISOFORM 1)</scope>
    <source>
        <strain>C57BL/6J</strain>
        <tissue>Bone marrow</tissue>
        <tissue>Colon</tissue>
    </source>
</reference>
<reference key="3">
    <citation type="journal article" date="2004" name="Genome Res.">
        <title>The status, quality, and expansion of the NIH full-length cDNA project: the Mammalian Gene Collection (MGC).</title>
        <authorList>
            <consortium name="The MGC Project Team"/>
        </authorList>
    </citation>
    <scope>NUCLEOTIDE SEQUENCE [LARGE SCALE MRNA] (ISOFORMS 1 AND 2)</scope>
    <source>
        <tissue>Kidney</tissue>
        <tissue>Mammary tumor</tissue>
    </source>
</reference>
<reference key="4">
    <citation type="journal article" date="2001" name="J. Cell Biol.">
        <title>A GRASP55-rab2 effector complex linking Golgi structure to membrane traffic.</title>
        <authorList>
            <person name="Short B."/>
            <person name="Preisinger C."/>
            <person name="Koerner R."/>
            <person name="Kopajtich R."/>
            <person name="Byron O."/>
            <person name="Barr F.A."/>
        </authorList>
    </citation>
    <scope>INTERACTION WITH BLZF1</scope>
    <scope>SUBUNIT</scope>
</reference>
<reference key="5">
    <citation type="journal article" date="2007" name="Proc. Natl. Acad. Sci. U.S.A.">
        <title>Large-scale phosphorylation analysis of mouse liver.</title>
        <authorList>
            <person name="Villen J."/>
            <person name="Beausoleil S.A."/>
            <person name="Gerber S.A."/>
            <person name="Gygi S.P."/>
        </authorList>
    </citation>
    <scope>IDENTIFICATION BY MASS SPECTROMETRY [LARGE SCALE ANALYSIS]</scope>
    <source>
        <tissue>Liver</tissue>
    </source>
</reference>
<reference key="6">
    <citation type="journal article" date="2010" name="Cell">
        <title>A tissue-specific atlas of mouse protein phosphorylation and expression.</title>
        <authorList>
            <person name="Huttlin E.L."/>
            <person name="Jedrychowski M.P."/>
            <person name="Elias J.E."/>
            <person name="Goswami T."/>
            <person name="Rad R."/>
            <person name="Beausoleil S.A."/>
            <person name="Villen J."/>
            <person name="Haas W."/>
            <person name="Sowa M.E."/>
            <person name="Gygi S.P."/>
        </authorList>
    </citation>
    <scope>PHOSPHORYLATION [LARGE SCALE ANALYSIS] AT SER-411 AND SER-443</scope>
    <scope>IDENTIFICATION BY MASS SPECTROMETRY [LARGE SCALE ANALYSIS]</scope>
    <source>
        <tissue>Brain</tissue>
        <tissue>Brown adipose tissue</tissue>
        <tissue>Heart</tissue>
        <tissue>Kidney</tissue>
        <tissue>Liver</tissue>
        <tissue>Lung</tissue>
        <tissue>Pancreas</tissue>
        <tissue>Spleen</tissue>
        <tissue>Testis</tissue>
    </source>
</reference>
<reference key="7">
    <citation type="journal article" date="2020" name="J. Cell Biol.">
        <title>The function of GORASPs in Golgi apparatus organization in vivo.</title>
        <authorList>
            <person name="Grond R."/>
            <person name="Veenendaal T."/>
            <person name="Duran J.M."/>
            <person name="Raote I."/>
            <person name="van Es J.H."/>
            <person name="Corstjens S."/>
            <person name="Delfgou L."/>
            <person name="El Haddouti B."/>
            <person name="Malhotra V."/>
            <person name="Rabouille C."/>
        </authorList>
    </citation>
    <scope>FUNCTION</scope>
</reference>
<reference evidence="16" key="8">
    <citation type="submission" date="2016-07" db="PDB data bank">
        <title>Structural relationship of the tandem PDZ tandem from Grasp55 and its implication in the unconventional secretion pathway.</title>
        <authorList>
            <person name="Cartier-Michaud A."/>
            <person name="Betzi S."/>
            <person name="Shi X."/>
            <person name="Shi N."/>
            <person name="Morelli X."/>
            <person name="Aurrand-Lions M."/>
        </authorList>
    </citation>
    <scope>X-RAY CRYSTALLOGRAPHY (2.55 ANGSTROMS) OF 2-208</scope>
</reference>
<reference evidence="17" key="9">
    <citation type="journal article" date="2017" name="J. Biol. Chem.">
        <title>Structural Basis for the Interaction between Golgi Reassembly-stacking Protein GRASP55 and Golgin45.</title>
        <authorList>
            <person name="Zhao J."/>
            <person name="Li B."/>
            <person name="Huang X."/>
            <person name="Morelli X."/>
            <person name="Shi N."/>
        </authorList>
    </citation>
    <scope>X-RAY CRYSTALLOGRAPHY (1.33 ANGSTROMS) OF 2-208 IN COMPLEX WITH BLZF1 PEPTIDE</scope>
    <scope>MUTAGENESIS OF GLY-97 AND ARG-101</scope>
</reference>
<reference evidence="14 15" key="10">
    <citation type="journal article" date="2017" name="PLoS Genet.">
        <title>Genetic, structural, and chemical insights into the dual function of GRASP55 in germ cell Golgi remodeling and JAM-C polarized localization during spermatogenesis.</title>
        <authorList>
            <person name="Cartier-Michaud A."/>
            <person name="Bailly A.L."/>
            <person name="Betzi S."/>
            <person name="Shi X."/>
            <person name="Lissitzky J.C."/>
            <person name="Zarubica A."/>
            <person name="Serge A."/>
            <person name="Roche P."/>
            <person name="Lugari A."/>
            <person name="Hamon V."/>
            <person name="Bardin F."/>
            <person name="Derviaux C."/>
            <person name="Lembo F."/>
            <person name="Audebert S."/>
            <person name="Marchetto S."/>
            <person name="Durand B."/>
            <person name="Borg J.P."/>
            <person name="Shi N."/>
            <person name="Morelli X."/>
            <person name="Aurrand-Lions M."/>
        </authorList>
    </citation>
    <scope>X-RAY CRYSTALLOGRAPHY (2.71 ANGSTROMS) OF 2-208 IN COMPLEXES WITH JAM2 AND JAM3</scope>
    <scope>FUNCTION</scope>
    <scope>IDENTIFICATION BY MASS SPECTROMETRY</scope>
    <scope>DISRUPTION PHENOTYPE</scope>
    <scope>TISSUE SPECIFICITY</scope>
</reference>
<accession>Q99JX3</accession>
<accession>Q3U9D2</accession>
<accession>Q8CCD0</accession>
<accession>Q91W68</accession>